<protein>
    <recommendedName>
        <fullName evidence="1">UDP-3-O-acylglucosamine N-acyltransferase</fullName>
        <ecNumber evidence="1">2.3.1.191</ecNumber>
    </recommendedName>
</protein>
<organism>
    <name type="scientific">Rhodopseudomonas palustris (strain BisB5)</name>
    <dbReference type="NCBI Taxonomy" id="316057"/>
    <lineage>
        <taxon>Bacteria</taxon>
        <taxon>Pseudomonadati</taxon>
        <taxon>Pseudomonadota</taxon>
        <taxon>Alphaproteobacteria</taxon>
        <taxon>Hyphomicrobiales</taxon>
        <taxon>Nitrobacteraceae</taxon>
        <taxon>Rhodopseudomonas</taxon>
    </lineage>
</organism>
<reference key="1">
    <citation type="submission" date="2006-03" db="EMBL/GenBank/DDBJ databases">
        <title>Complete sequence of Rhodopseudomonas palustris BisB5.</title>
        <authorList>
            <consortium name="US DOE Joint Genome Institute"/>
            <person name="Copeland A."/>
            <person name="Lucas S."/>
            <person name="Lapidus A."/>
            <person name="Barry K."/>
            <person name="Detter J.C."/>
            <person name="Glavina del Rio T."/>
            <person name="Hammon N."/>
            <person name="Israni S."/>
            <person name="Dalin E."/>
            <person name="Tice H."/>
            <person name="Pitluck S."/>
            <person name="Chain P."/>
            <person name="Malfatti S."/>
            <person name="Shin M."/>
            <person name="Vergez L."/>
            <person name="Schmutz J."/>
            <person name="Larimer F."/>
            <person name="Land M."/>
            <person name="Hauser L."/>
            <person name="Pelletier D.A."/>
            <person name="Kyrpides N."/>
            <person name="Lykidis A."/>
            <person name="Oda Y."/>
            <person name="Harwood C.S."/>
            <person name="Richardson P."/>
        </authorList>
    </citation>
    <scope>NUCLEOTIDE SEQUENCE [LARGE SCALE GENOMIC DNA]</scope>
    <source>
        <strain>BisB5</strain>
    </source>
</reference>
<evidence type="ECO:0000255" key="1">
    <source>
        <dbReference type="HAMAP-Rule" id="MF_00523"/>
    </source>
</evidence>
<sequence length="359" mass="37657">MTSTLFFKPRPSSTLAEIAALTKAELIDPSQGDRVITGIASLDEAGPMHLGFFENLNYVAELEQTCAGACLVTQRHESRVPSHVAVLRVKSPVRAFVTYARHIHEDAMRPMSGFRSVGIAPSAVIHATARLEDGVIVDPLAVIGPEVEIGAGSVIGAGSVIASGVKIGRDCNVGANTTIQFALIGNNVLIHPGCHIGQDGFRFIFAQTHQKVPQVGRVIIQNDVEIGSGTTVDRGGLRDTVIGEGTKIDNQVQVGHNVTIGRHCVIAAQCGLAGSLTLGDNVALGAKVGVNNHVTIGDGAQITAMSAVKDSVPAGERWGGFFAKPTKQWFREIIAVERLLRSGAGAAPKSDDGKDGERG</sequence>
<dbReference type="EC" id="2.3.1.191" evidence="1"/>
<dbReference type="EMBL" id="CP000283">
    <property type="protein sequence ID" value="ABE40076.1"/>
    <property type="molecule type" value="Genomic_DNA"/>
</dbReference>
<dbReference type="SMR" id="Q136B3"/>
<dbReference type="STRING" id="316057.RPD_2848"/>
<dbReference type="KEGG" id="rpd:RPD_2848"/>
<dbReference type="eggNOG" id="COG1044">
    <property type="taxonomic scope" value="Bacteria"/>
</dbReference>
<dbReference type="HOGENOM" id="CLU_049865_0_2_5"/>
<dbReference type="BioCyc" id="RPAL316057:RPD_RS14310-MONOMER"/>
<dbReference type="UniPathway" id="UPA00973"/>
<dbReference type="Proteomes" id="UP000001818">
    <property type="component" value="Chromosome"/>
</dbReference>
<dbReference type="GO" id="GO:0016020">
    <property type="term" value="C:membrane"/>
    <property type="evidence" value="ECO:0007669"/>
    <property type="project" value="GOC"/>
</dbReference>
<dbReference type="GO" id="GO:0016410">
    <property type="term" value="F:N-acyltransferase activity"/>
    <property type="evidence" value="ECO:0007669"/>
    <property type="project" value="InterPro"/>
</dbReference>
<dbReference type="GO" id="GO:0009245">
    <property type="term" value="P:lipid A biosynthetic process"/>
    <property type="evidence" value="ECO:0007669"/>
    <property type="project" value="UniProtKB-UniRule"/>
</dbReference>
<dbReference type="CDD" id="cd03352">
    <property type="entry name" value="LbH_LpxD"/>
    <property type="match status" value="1"/>
</dbReference>
<dbReference type="Gene3D" id="2.160.10.10">
    <property type="entry name" value="Hexapeptide repeat proteins"/>
    <property type="match status" value="1"/>
</dbReference>
<dbReference type="Gene3D" id="3.40.1390.10">
    <property type="entry name" value="MurE/MurF, N-terminal domain"/>
    <property type="match status" value="1"/>
</dbReference>
<dbReference type="HAMAP" id="MF_00523">
    <property type="entry name" value="LpxD"/>
    <property type="match status" value="1"/>
</dbReference>
<dbReference type="InterPro" id="IPR001451">
    <property type="entry name" value="Hexapep"/>
</dbReference>
<dbReference type="InterPro" id="IPR018357">
    <property type="entry name" value="Hexapep_transf_CS"/>
</dbReference>
<dbReference type="InterPro" id="IPR007691">
    <property type="entry name" value="LpxD"/>
</dbReference>
<dbReference type="InterPro" id="IPR011004">
    <property type="entry name" value="Trimer_LpxA-like_sf"/>
</dbReference>
<dbReference type="InterPro" id="IPR020573">
    <property type="entry name" value="UDP_GlcNAc_AcTrfase_non-rep"/>
</dbReference>
<dbReference type="NCBIfam" id="TIGR01853">
    <property type="entry name" value="lipid_A_lpxD"/>
    <property type="match status" value="1"/>
</dbReference>
<dbReference type="NCBIfam" id="NF002060">
    <property type="entry name" value="PRK00892.1"/>
    <property type="match status" value="1"/>
</dbReference>
<dbReference type="PANTHER" id="PTHR43378">
    <property type="entry name" value="UDP-3-O-ACYLGLUCOSAMINE N-ACYLTRANSFERASE"/>
    <property type="match status" value="1"/>
</dbReference>
<dbReference type="PANTHER" id="PTHR43378:SF2">
    <property type="entry name" value="UDP-3-O-ACYLGLUCOSAMINE N-ACYLTRANSFERASE 1, MITOCHONDRIAL-RELATED"/>
    <property type="match status" value="1"/>
</dbReference>
<dbReference type="Pfam" id="PF00132">
    <property type="entry name" value="Hexapep"/>
    <property type="match status" value="2"/>
</dbReference>
<dbReference type="Pfam" id="PF14602">
    <property type="entry name" value="Hexapep_2"/>
    <property type="match status" value="1"/>
</dbReference>
<dbReference type="Pfam" id="PF04613">
    <property type="entry name" value="LpxD"/>
    <property type="match status" value="1"/>
</dbReference>
<dbReference type="SUPFAM" id="SSF51161">
    <property type="entry name" value="Trimeric LpxA-like enzymes"/>
    <property type="match status" value="1"/>
</dbReference>
<dbReference type="PROSITE" id="PS00101">
    <property type="entry name" value="HEXAPEP_TRANSFERASES"/>
    <property type="match status" value="2"/>
</dbReference>
<accession>Q136B3</accession>
<feature type="chain" id="PRO_0000264427" description="UDP-3-O-acylglucosamine N-acyltransferase">
    <location>
        <begin position="1"/>
        <end position="359"/>
    </location>
</feature>
<feature type="active site" description="Proton acceptor" evidence="1">
    <location>
        <position position="256"/>
    </location>
</feature>
<comment type="function">
    <text evidence="1">Catalyzes the N-acylation of UDP-3-O-acylglucosamine using 3-hydroxyacyl-ACP as the acyl donor. Is involved in the biosynthesis of lipid A, a phosphorylated glycolipid that anchors the lipopolysaccharide to the outer membrane of the cell.</text>
</comment>
<comment type="catalytic activity">
    <reaction evidence="1">
        <text>a UDP-3-O-[(3R)-3-hydroxyacyl]-alpha-D-glucosamine + a (3R)-hydroxyacyl-[ACP] = a UDP-2-N,3-O-bis[(3R)-3-hydroxyacyl]-alpha-D-glucosamine + holo-[ACP] + H(+)</text>
        <dbReference type="Rhea" id="RHEA:53836"/>
        <dbReference type="Rhea" id="RHEA-COMP:9685"/>
        <dbReference type="Rhea" id="RHEA-COMP:9945"/>
        <dbReference type="ChEBI" id="CHEBI:15378"/>
        <dbReference type="ChEBI" id="CHEBI:64479"/>
        <dbReference type="ChEBI" id="CHEBI:78827"/>
        <dbReference type="ChEBI" id="CHEBI:137740"/>
        <dbReference type="ChEBI" id="CHEBI:137748"/>
        <dbReference type="EC" id="2.3.1.191"/>
    </reaction>
</comment>
<comment type="pathway">
    <text evidence="1">Bacterial outer membrane biogenesis; LPS lipid A biosynthesis.</text>
</comment>
<comment type="subunit">
    <text evidence="1">Homotrimer.</text>
</comment>
<comment type="similarity">
    <text evidence="1">Belongs to the transferase hexapeptide repeat family. LpxD subfamily.</text>
</comment>
<gene>
    <name evidence="1" type="primary">lpxD</name>
    <name type="ordered locus">RPD_2848</name>
</gene>
<proteinExistence type="inferred from homology"/>
<keyword id="KW-0012">Acyltransferase</keyword>
<keyword id="KW-0441">Lipid A biosynthesis</keyword>
<keyword id="KW-0444">Lipid biosynthesis</keyword>
<keyword id="KW-0443">Lipid metabolism</keyword>
<keyword id="KW-0677">Repeat</keyword>
<keyword id="KW-0808">Transferase</keyword>
<name>LPXD_RHOPS</name>